<sequence>MARANPRRRATAAKDKWKMKEWFVVYAPDFFGSKEIGLTPADEPEKVIGRVVETTLKDLTGDFTKGHVKLYFQVYDVKGQNAYTKFKGHTLARSYIRSLVRRRTTRVDGIFNITTKDGYKLRVMGMVIAYRRIQTSQERAIRRIIQDIIYKKAEELNFADFVLQSVNGQIASEIAKEARKIYPIKRAEIRKIKVLAEPEA</sequence>
<feature type="chain" id="PRO_1000205386" description="Small ribosomal subunit protein eS1">
    <location>
        <begin position="1"/>
        <end position="200"/>
    </location>
</feature>
<evidence type="ECO:0000255" key="1">
    <source>
        <dbReference type="HAMAP-Rule" id="MF_00359"/>
    </source>
</evidence>
<evidence type="ECO:0000305" key="2"/>
<keyword id="KW-1185">Reference proteome</keyword>
<keyword id="KW-0687">Ribonucleoprotein</keyword>
<keyword id="KW-0689">Ribosomal protein</keyword>
<gene>
    <name evidence="1" type="primary">rps3ae</name>
    <name type="ordered locus">TGAM_0862</name>
</gene>
<protein>
    <recommendedName>
        <fullName evidence="1">Small ribosomal subunit protein eS1</fullName>
    </recommendedName>
    <alternativeName>
        <fullName evidence="2">30S ribosomal protein S3Ae</fullName>
    </alternativeName>
    <alternativeName>
        <fullName evidence="1">Ribosomal protein S1e</fullName>
    </alternativeName>
</protein>
<accession>C5A552</accession>
<comment type="similarity">
    <text evidence="1">Belongs to the eukaryotic ribosomal protein eS1 family.</text>
</comment>
<organism>
    <name type="scientific">Thermococcus gammatolerans (strain DSM 15229 / JCM 11827 / EJ3)</name>
    <dbReference type="NCBI Taxonomy" id="593117"/>
    <lineage>
        <taxon>Archaea</taxon>
        <taxon>Methanobacteriati</taxon>
        <taxon>Methanobacteriota</taxon>
        <taxon>Thermococci</taxon>
        <taxon>Thermococcales</taxon>
        <taxon>Thermococcaceae</taxon>
        <taxon>Thermococcus</taxon>
    </lineage>
</organism>
<proteinExistence type="inferred from homology"/>
<dbReference type="EMBL" id="CP001398">
    <property type="protein sequence ID" value="ACS33364.1"/>
    <property type="molecule type" value="Genomic_DNA"/>
</dbReference>
<dbReference type="RefSeq" id="WP_014121360.1">
    <property type="nucleotide sequence ID" value="NC_012804.1"/>
</dbReference>
<dbReference type="SMR" id="C5A552"/>
<dbReference type="STRING" id="593117.TGAM_0862"/>
<dbReference type="PaxDb" id="593117-TGAM_0862"/>
<dbReference type="GeneID" id="7989029"/>
<dbReference type="KEGG" id="tga:TGAM_0862"/>
<dbReference type="PATRIC" id="fig|593117.10.peg.859"/>
<dbReference type="eggNOG" id="arCOG04186">
    <property type="taxonomic scope" value="Archaea"/>
</dbReference>
<dbReference type="HOGENOM" id="CLU_062507_1_0_2"/>
<dbReference type="OrthoDB" id="30639at2157"/>
<dbReference type="Proteomes" id="UP000001488">
    <property type="component" value="Chromosome"/>
</dbReference>
<dbReference type="GO" id="GO:1990904">
    <property type="term" value="C:ribonucleoprotein complex"/>
    <property type="evidence" value="ECO:0007669"/>
    <property type="project" value="UniProtKB-KW"/>
</dbReference>
<dbReference type="GO" id="GO:0005840">
    <property type="term" value="C:ribosome"/>
    <property type="evidence" value="ECO:0007669"/>
    <property type="project" value="UniProtKB-KW"/>
</dbReference>
<dbReference type="GO" id="GO:0003735">
    <property type="term" value="F:structural constituent of ribosome"/>
    <property type="evidence" value="ECO:0007669"/>
    <property type="project" value="InterPro"/>
</dbReference>
<dbReference type="GO" id="GO:0006412">
    <property type="term" value="P:translation"/>
    <property type="evidence" value="ECO:0007669"/>
    <property type="project" value="UniProtKB-UniRule"/>
</dbReference>
<dbReference type="HAMAP" id="MF_00359">
    <property type="entry name" value="Ribosomal_eS1"/>
    <property type="match status" value="1"/>
</dbReference>
<dbReference type="InterPro" id="IPR001593">
    <property type="entry name" value="Ribosomal_eS1"/>
</dbReference>
<dbReference type="InterPro" id="IPR030838">
    <property type="entry name" value="Ribosomal_eS1_arc"/>
</dbReference>
<dbReference type="InterPro" id="IPR018281">
    <property type="entry name" value="Ribosomal_eS1_CS"/>
</dbReference>
<dbReference type="NCBIfam" id="NF003142">
    <property type="entry name" value="PRK04057.1"/>
    <property type="match status" value="1"/>
</dbReference>
<dbReference type="Pfam" id="PF01015">
    <property type="entry name" value="Ribosomal_S3Ae"/>
    <property type="match status" value="1"/>
</dbReference>
<dbReference type="SMART" id="SM01397">
    <property type="entry name" value="Ribosomal_S3Ae"/>
    <property type="match status" value="1"/>
</dbReference>
<dbReference type="PROSITE" id="PS01191">
    <property type="entry name" value="RIBOSOMAL_S3AE"/>
    <property type="match status" value="1"/>
</dbReference>
<name>RS3A_THEGJ</name>
<reference key="1">
    <citation type="journal article" date="2007" name="Genome Biol.">
        <title>Genome analysis and genome-wide proteomics of Thermococcus gammatolerans, the most radioresistant organism known amongst the Archaea.</title>
        <authorList>
            <person name="Zivanovic Y."/>
            <person name="Armengaud J."/>
            <person name="Lagorce A."/>
            <person name="Leplat C."/>
            <person name="Guerin P."/>
            <person name="Dutertre M."/>
            <person name="Anthouard V."/>
            <person name="Forterre P."/>
            <person name="Wincker P."/>
            <person name="Confalonieri F."/>
        </authorList>
    </citation>
    <scope>NUCLEOTIDE SEQUENCE [LARGE SCALE GENOMIC DNA]</scope>
    <source>
        <strain>DSM 15229 / JCM 11827 / EJ3</strain>
    </source>
</reference>